<gene>
    <name type="primary">prtT</name>
    <name type="ORF">ACLA_049340</name>
</gene>
<sequence>MTRTTTLEEVKFEIPTWDNNNHIEVADGSGRSESNASGDTIRPKGRIRRSMTACNTCRKLKTRCDLDPRGHACRRCLSLRIECKLPDTAERFQDNASMWSDATAAIPSIEERLNSLERSMTEMTSMMRQMVDRSPSISGSSVSLLTRSGLTEETASVEGSQPSFIAPRPIRLIQELQSDFLGEPNVLPAESRSLSESFSNGVLDPKLSLKLIQLFVEHFGSWVSIDSPSDIHNDLRPTDPLLYRTACLLASRYVPGIPSSVIQAEYLQIRHAAVNILWNSQPMKYETLQALTLLSLWPTTIQKEAPMDSWLLSGISINHAIISFDFLNHAPAELIVDNDMVAKLRLWNALCLTQLQFAIGNARPFHIQQRYLEHCPRLLEHPAATFDDGKMVAEIQLYLVTSKLQNDPHRMRSAEIEYEEIERWKMEWAHLLTGEQHSTLELNLWYCQLLLYRTAMKCQWESEPLVSEVLRNARLIISKFLLVRFSTALGFVDQTYYIVGYAALNLCDFNPMDPLIDQVQTFLLHLSPNEDHIAYRFSYTISELKRRCTACPNPNSAVKGAFGDARKLNLGQLHFMPQVLDTMMGDYSALEQLMPEVSPHSLPDMLNNVTGELQAGYRTAIL</sequence>
<reference key="1">
    <citation type="journal article" date="2008" name="PLoS Genet.">
        <title>Genomic islands in the pathogenic filamentous fungus Aspergillus fumigatus.</title>
        <authorList>
            <person name="Fedorova N.D."/>
            <person name="Khaldi N."/>
            <person name="Joardar V.S."/>
            <person name="Maiti R."/>
            <person name="Amedeo P."/>
            <person name="Anderson M.J."/>
            <person name="Crabtree J."/>
            <person name="Silva J.C."/>
            <person name="Badger J.H."/>
            <person name="Albarraq A."/>
            <person name="Angiuoli S."/>
            <person name="Bussey H."/>
            <person name="Bowyer P."/>
            <person name="Cotty P.J."/>
            <person name="Dyer P.S."/>
            <person name="Egan A."/>
            <person name="Galens K."/>
            <person name="Fraser-Liggett C.M."/>
            <person name="Haas B.J."/>
            <person name="Inman J.M."/>
            <person name="Kent R."/>
            <person name="Lemieux S."/>
            <person name="Malavazi I."/>
            <person name="Orvis J."/>
            <person name="Roemer T."/>
            <person name="Ronning C.M."/>
            <person name="Sundaram J.P."/>
            <person name="Sutton G."/>
            <person name="Turner G."/>
            <person name="Venter J.C."/>
            <person name="White O.R."/>
            <person name="Whitty B.R."/>
            <person name="Youngman P."/>
            <person name="Wolfe K.H."/>
            <person name="Goldman G.H."/>
            <person name="Wortman J.R."/>
            <person name="Jiang B."/>
            <person name="Denning D.W."/>
            <person name="Nierman W.C."/>
        </authorList>
    </citation>
    <scope>NUCLEOTIDE SEQUENCE [LARGE SCALE GENOMIC DNA]</scope>
    <source>
        <strain>ATCC 1007 / CBS 513.65 / DSM 816 / NCTC 3887 / NRRL 1 / QM 1276 / 107</strain>
    </source>
</reference>
<comment type="function">
    <text evidence="1">Transcription factor required for protein utilization and degradation. Regulates transcription of major secreted proteases (By similarity).</text>
</comment>
<comment type="subcellular location">
    <subcellularLocation>
        <location evidence="2">Nucleus</location>
    </subcellularLocation>
</comment>
<comment type="similarity">
    <text evidence="3">Belongs to the prtT family.</text>
</comment>
<name>PRTT_ASPCL</name>
<organism>
    <name type="scientific">Aspergillus clavatus (strain ATCC 1007 / CBS 513.65 / DSM 816 / NCTC 3887 / NRRL 1 / QM 1276 / 107)</name>
    <dbReference type="NCBI Taxonomy" id="344612"/>
    <lineage>
        <taxon>Eukaryota</taxon>
        <taxon>Fungi</taxon>
        <taxon>Dikarya</taxon>
        <taxon>Ascomycota</taxon>
        <taxon>Pezizomycotina</taxon>
        <taxon>Eurotiomycetes</taxon>
        <taxon>Eurotiomycetidae</taxon>
        <taxon>Eurotiales</taxon>
        <taxon>Aspergillaceae</taxon>
        <taxon>Aspergillus</taxon>
        <taxon>Aspergillus subgen. Fumigati</taxon>
    </lineage>
</organism>
<feature type="chain" id="PRO_0000407030" description="Transcriptional activator of proteases prtT">
    <location>
        <begin position="1"/>
        <end position="622"/>
    </location>
</feature>
<feature type="DNA-binding region" description="Zn(2)-C6 fungal-type" evidence="2">
    <location>
        <begin position="54"/>
        <end position="83"/>
    </location>
</feature>
<accession>A1CHV7</accession>
<evidence type="ECO:0000250" key="1"/>
<evidence type="ECO:0000255" key="2">
    <source>
        <dbReference type="PROSITE-ProRule" id="PRU00227"/>
    </source>
</evidence>
<evidence type="ECO:0000305" key="3"/>
<proteinExistence type="inferred from homology"/>
<protein>
    <recommendedName>
        <fullName>Transcriptional activator of proteases prtT</fullName>
    </recommendedName>
    <alternativeName>
        <fullName>Zn(2)-C6 zinc finger-containing protein prtT</fullName>
    </alternativeName>
</protein>
<keyword id="KW-0238">DNA-binding</keyword>
<keyword id="KW-0479">Metal-binding</keyword>
<keyword id="KW-0539">Nucleus</keyword>
<keyword id="KW-1185">Reference proteome</keyword>
<keyword id="KW-0804">Transcription</keyword>
<keyword id="KW-0805">Transcription regulation</keyword>
<keyword id="KW-0862">Zinc</keyword>
<dbReference type="EMBL" id="DS027054">
    <property type="protein sequence ID" value="EAW10462.1"/>
    <property type="molecule type" value="Genomic_DNA"/>
</dbReference>
<dbReference type="RefSeq" id="XP_001271888.1">
    <property type="nucleotide sequence ID" value="XM_001271887.1"/>
</dbReference>
<dbReference type="EnsemblFungi" id="EAW10462">
    <property type="protein sequence ID" value="EAW10462"/>
    <property type="gene ID" value="ACLA_049340"/>
</dbReference>
<dbReference type="GeneID" id="4703912"/>
<dbReference type="KEGG" id="act:ACLA_049340"/>
<dbReference type="VEuPathDB" id="FungiDB:ACLA_049340"/>
<dbReference type="eggNOG" id="ENOG502QU5T">
    <property type="taxonomic scope" value="Eukaryota"/>
</dbReference>
<dbReference type="HOGENOM" id="CLU_030102_0_0_1"/>
<dbReference type="OMA" id="EMTSMMR"/>
<dbReference type="OrthoDB" id="2595934at2759"/>
<dbReference type="Proteomes" id="UP000006701">
    <property type="component" value="Unassembled WGS sequence"/>
</dbReference>
<dbReference type="GO" id="GO:0005634">
    <property type="term" value="C:nucleus"/>
    <property type="evidence" value="ECO:0007669"/>
    <property type="project" value="UniProtKB-SubCell"/>
</dbReference>
<dbReference type="GO" id="GO:0000981">
    <property type="term" value="F:DNA-binding transcription factor activity, RNA polymerase II-specific"/>
    <property type="evidence" value="ECO:0007669"/>
    <property type="project" value="InterPro"/>
</dbReference>
<dbReference type="GO" id="GO:0000976">
    <property type="term" value="F:transcription cis-regulatory region binding"/>
    <property type="evidence" value="ECO:0007669"/>
    <property type="project" value="TreeGrafter"/>
</dbReference>
<dbReference type="GO" id="GO:0008270">
    <property type="term" value="F:zinc ion binding"/>
    <property type="evidence" value="ECO:0007669"/>
    <property type="project" value="InterPro"/>
</dbReference>
<dbReference type="CDD" id="cd12148">
    <property type="entry name" value="fungal_TF_MHR"/>
    <property type="match status" value="1"/>
</dbReference>
<dbReference type="CDD" id="cd00067">
    <property type="entry name" value="GAL4"/>
    <property type="match status" value="1"/>
</dbReference>
<dbReference type="FunFam" id="4.10.240.10:FF:000011">
    <property type="entry name" value="Transcriptional activator of proteases prtT"/>
    <property type="match status" value="1"/>
</dbReference>
<dbReference type="Gene3D" id="4.10.240.10">
    <property type="entry name" value="Zn(2)-C6 fungal-type DNA-binding domain"/>
    <property type="match status" value="1"/>
</dbReference>
<dbReference type="InterPro" id="IPR051089">
    <property type="entry name" value="prtT"/>
</dbReference>
<dbReference type="InterPro" id="IPR036864">
    <property type="entry name" value="Zn2-C6_fun-type_DNA-bd_sf"/>
</dbReference>
<dbReference type="InterPro" id="IPR001138">
    <property type="entry name" value="Zn2Cys6_DnaBD"/>
</dbReference>
<dbReference type="PANTHER" id="PTHR31845">
    <property type="entry name" value="FINGER DOMAIN PROTEIN, PUTATIVE-RELATED"/>
    <property type="match status" value="1"/>
</dbReference>
<dbReference type="PANTHER" id="PTHR31845:SF34">
    <property type="entry name" value="TRANSCRIPTIONAL ACTIVATOR OF PROTEASES PRTT"/>
    <property type="match status" value="1"/>
</dbReference>
<dbReference type="Pfam" id="PF00172">
    <property type="entry name" value="Zn_clus"/>
    <property type="match status" value="1"/>
</dbReference>
<dbReference type="SMART" id="SM00066">
    <property type="entry name" value="GAL4"/>
    <property type="match status" value="1"/>
</dbReference>
<dbReference type="SUPFAM" id="SSF57701">
    <property type="entry name" value="Zn2/Cys6 DNA-binding domain"/>
    <property type="match status" value="1"/>
</dbReference>
<dbReference type="PROSITE" id="PS00463">
    <property type="entry name" value="ZN2_CY6_FUNGAL_1"/>
    <property type="match status" value="1"/>
</dbReference>
<dbReference type="PROSITE" id="PS50048">
    <property type="entry name" value="ZN2_CY6_FUNGAL_2"/>
    <property type="match status" value="1"/>
</dbReference>